<gene>
    <name evidence="1" type="primary">rsmG</name>
    <name type="ordered locus">Anae109_4504</name>
</gene>
<sequence>MEPAFHAALSRGLAALALPVAPEALPRLERFADRLLAWNRKVNLTTITDPAEVAEKHLVDSLLLLPLLDEVRTLLDLGSGAGLPGVPLACARPALEVTCCDSVAKKVAFVKAVAAELDLPVRAFAVRAEGDPEGEKLPRADAVVSRALSDPERWVPLGVRYLAPGGTLFAMLGREADEARLAAIGAASGLALVDVSRFELPLSRSARAIARWRAR</sequence>
<evidence type="ECO:0000255" key="1">
    <source>
        <dbReference type="HAMAP-Rule" id="MF_00074"/>
    </source>
</evidence>
<accession>A7HIY6</accession>
<proteinExistence type="inferred from homology"/>
<reference key="1">
    <citation type="journal article" date="2015" name="Genome Announc.">
        <title>Complete genome sequence of Anaeromyxobacter sp. Fw109-5, an anaerobic, metal-reducing bacterium isolated from a contaminated subsurface environment.</title>
        <authorList>
            <person name="Hwang C."/>
            <person name="Copeland A."/>
            <person name="Lucas S."/>
            <person name="Lapidus A."/>
            <person name="Barry K."/>
            <person name="Glavina Del Rio T."/>
            <person name="Dalin E."/>
            <person name="Tice H."/>
            <person name="Pitluck S."/>
            <person name="Sims D."/>
            <person name="Brettin T."/>
            <person name="Bruce D.C."/>
            <person name="Detter J.C."/>
            <person name="Han C.S."/>
            <person name="Schmutz J."/>
            <person name="Larimer F.W."/>
            <person name="Land M.L."/>
            <person name="Hauser L.J."/>
            <person name="Kyrpides N."/>
            <person name="Lykidis A."/>
            <person name="Richardson P."/>
            <person name="Belieav A."/>
            <person name="Sanford R.A."/>
            <person name="Loeffler F.E."/>
            <person name="Fields M.W."/>
        </authorList>
    </citation>
    <scope>NUCLEOTIDE SEQUENCE [LARGE SCALE GENOMIC DNA]</scope>
    <source>
        <strain>Fw109-5</strain>
    </source>
</reference>
<name>RSMG_ANADF</name>
<organism>
    <name type="scientific">Anaeromyxobacter sp. (strain Fw109-5)</name>
    <dbReference type="NCBI Taxonomy" id="404589"/>
    <lineage>
        <taxon>Bacteria</taxon>
        <taxon>Pseudomonadati</taxon>
        <taxon>Myxococcota</taxon>
        <taxon>Myxococcia</taxon>
        <taxon>Myxococcales</taxon>
        <taxon>Cystobacterineae</taxon>
        <taxon>Anaeromyxobacteraceae</taxon>
        <taxon>Anaeromyxobacter</taxon>
    </lineage>
</organism>
<comment type="function">
    <text evidence="1">Specifically methylates the N7 position of guanine in position 527 of 16S rRNA.</text>
</comment>
<comment type="catalytic activity">
    <reaction evidence="1">
        <text>guanosine(527) in 16S rRNA + S-adenosyl-L-methionine = N(7)-methylguanosine(527) in 16S rRNA + S-adenosyl-L-homocysteine</text>
        <dbReference type="Rhea" id="RHEA:42732"/>
        <dbReference type="Rhea" id="RHEA-COMP:10209"/>
        <dbReference type="Rhea" id="RHEA-COMP:10210"/>
        <dbReference type="ChEBI" id="CHEBI:57856"/>
        <dbReference type="ChEBI" id="CHEBI:59789"/>
        <dbReference type="ChEBI" id="CHEBI:74269"/>
        <dbReference type="ChEBI" id="CHEBI:74480"/>
        <dbReference type="EC" id="2.1.1.170"/>
    </reaction>
</comment>
<comment type="subcellular location">
    <subcellularLocation>
        <location evidence="1">Cytoplasm</location>
    </subcellularLocation>
</comment>
<comment type="similarity">
    <text evidence="1">Belongs to the methyltransferase superfamily. RNA methyltransferase RsmG family.</text>
</comment>
<dbReference type="EC" id="2.1.1.170" evidence="1"/>
<dbReference type="EMBL" id="CP000769">
    <property type="protein sequence ID" value="ABS28682.1"/>
    <property type="molecule type" value="Genomic_DNA"/>
</dbReference>
<dbReference type="RefSeq" id="WP_012099332.1">
    <property type="nucleotide sequence ID" value="NC_009675.1"/>
</dbReference>
<dbReference type="SMR" id="A7HIY6"/>
<dbReference type="STRING" id="404589.Anae109_4504"/>
<dbReference type="KEGG" id="afw:Anae109_4504"/>
<dbReference type="eggNOG" id="COG0357">
    <property type="taxonomic scope" value="Bacteria"/>
</dbReference>
<dbReference type="HOGENOM" id="CLU_065341_2_0_7"/>
<dbReference type="OrthoDB" id="9808773at2"/>
<dbReference type="Proteomes" id="UP000006382">
    <property type="component" value="Chromosome"/>
</dbReference>
<dbReference type="GO" id="GO:0005829">
    <property type="term" value="C:cytosol"/>
    <property type="evidence" value="ECO:0007669"/>
    <property type="project" value="TreeGrafter"/>
</dbReference>
<dbReference type="GO" id="GO:0070043">
    <property type="term" value="F:rRNA (guanine-N7-)-methyltransferase activity"/>
    <property type="evidence" value="ECO:0007669"/>
    <property type="project" value="UniProtKB-UniRule"/>
</dbReference>
<dbReference type="CDD" id="cd02440">
    <property type="entry name" value="AdoMet_MTases"/>
    <property type="match status" value="1"/>
</dbReference>
<dbReference type="Gene3D" id="3.40.50.150">
    <property type="entry name" value="Vaccinia Virus protein VP39"/>
    <property type="match status" value="1"/>
</dbReference>
<dbReference type="HAMAP" id="MF_00074">
    <property type="entry name" value="16SrRNA_methyltr_G"/>
    <property type="match status" value="1"/>
</dbReference>
<dbReference type="InterPro" id="IPR003682">
    <property type="entry name" value="rRNA_ssu_MeTfrase_G"/>
</dbReference>
<dbReference type="InterPro" id="IPR029063">
    <property type="entry name" value="SAM-dependent_MTases_sf"/>
</dbReference>
<dbReference type="NCBIfam" id="TIGR00138">
    <property type="entry name" value="rsmG_gidB"/>
    <property type="match status" value="1"/>
</dbReference>
<dbReference type="PANTHER" id="PTHR31760">
    <property type="entry name" value="S-ADENOSYL-L-METHIONINE-DEPENDENT METHYLTRANSFERASES SUPERFAMILY PROTEIN"/>
    <property type="match status" value="1"/>
</dbReference>
<dbReference type="PANTHER" id="PTHR31760:SF0">
    <property type="entry name" value="S-ADENOSYL-L-METHIONINE-DEPENDENT METHYLTRANSFERASES SUPERFAMILY PROTEIN"/>
    <property type="match status" value="1"/>
</dbReference>
<dbReference type="Pfam" id="PF02527">
    <property type="entry name" value="GidB"/>
    <property type="match status" value="1"/>
</dbReference>
<dbReference type="PIRSF" id="PIRSF003078">
    <property type="entry name" value="GidB"/>
    <property type="match status" value="1"/>
</dbReference>
<dbReference type="SUPFAM" id="SSF53335">
    <property type="entry name" value="S-adenosyl-L-methionine-dependent methyltransferases"/>
    <property type="match status" value="1"/>
</dbReference>
<keyword id="KW-0963">Cytoplasm</keyword>
<keyword id="KW-0489">Methyltransferase</keyword>
<keyword id="KW-1185">Reference proteome</keyword>
<keyword id="KW-0698">rRNA processing</keyword>
<keyword id="KW-0949">S-adenosyl-L-methionine</keyword>
<keyword id="KW-0808">Transferase</keyword>
<feature type="chain" id="PRO_1000010115" description="Ribosomal RNA small subunit methyltransferase G">
    <location>
        <begin position="1"/>
        <end position="215"/>
    </location>
</feature>
<feature type="binding site" evidence="1">
    <location>
        <position position="78"/>
    </location>
    <ligand>
        <name>S-adenosyl-L-methionine</name>
        <dbReference type="ChEBI" id="CHEBI:59789"/>
    </ligand>
</feature>
<feature type="binding site" evidence="1">
    <location>
        <position position="83"/>
    </location>
    <ligand>
        <name>S-adenosyl-L-methionine</name>
        <dbReference type="ChEBI" id="CHEBI:59789"/>
    </ligand>
</feature>
<feature type="binding site" evidence="1">
    <location>
        <begin position="128"/>
        <end position="129"/>
    </location>
    <ligand>
        <name>S-adenosyl-L-methionine</name>
        <dbReference type="ChEBI" id="CHEBI:59789"/>
    </ligand>
</feature>
<feature type="binding site" evidence="1">
    <location>
        <position position="146"/>
    </location>
    <ligand>
        <name>S-adenosyl-L-methionine</name>
        <dbReference type="ChEBI" id="CHEBI:59789"/>
    </ligand>
</feature>
<protein>
    <recommendedName>
        <fullName evidence="1">Ribosomal RNA small subunit methyltransferase G</fullName>
        <ecNumber evidence="1">2.1.1.170</ecNumber>
    </recommendedName>
    <alternativeName>
        <fullName evidence="1">16S rRNA 7-methylguanosine methyltransferase</fullName>
        <shortName evidence="1">16S rRNA m7G methyltransferase</shortName>
    </alternativeName>
</protein>